<feature type="chain" id="PRO_1000078716" description="Small ribosomal subunit protein bS18">
    <location>
        <begin position="1"/>
        <end position="80"/>
    </location>
</feature>
<dbReference type="EMBL" id="CP000736">
    <property type="protein sequence ID" value="ABR51288.1"/>
    <property type="molecule type" value="Genomic_DNA"/>
</dbReference>
<dbReference type="SMR" id="A6TYM0"/>
<dbReference type="KEGG" id="sah:SaurJH1_0426"/>
<dbReference type="HOGENOM" id="CLU_148710_2_2_9"/>
<dbReference type="GO" id="GO:0022627">
    <property type="term" value="C:cytosolic small ribosomal subunit"/>
    <property type="evidence" value="ECO:0007669"/>
    <property type="project" value="TreeGrafter"/>
</dbReference>
<dbReference type="GO" id="GO:0070181">
    <property type="term" value="F:small ribosomal subunit rRNA binding"/>
    <property type="evidence" value="ECO:0007669"/>
    <property type="project" value="TreeGrafter"/>
</dbReference>
<dbReference type="GO" id="GO:0003735">
    <property type="term" value="F:structural constituent of ribosome"/>
    <property type="evidence" value="ECO:0007669"/>
    <property type="project" value="InterPro"/>
</dbReference>
<dbReference type="GO" id="GO:0006412">
    <property type="term" value="P:translation"/>
    <property type="evidence" value="ECO:0007669"/>
    <property type="project" value="UniProtKB-UniRule"/>
</dbReference>
<dbReference type="FunFam" id="4.10.640.10:FF:000003">
    <property type="entry name" value="30S ribosomal protein S18"/>
    <property type="match status" value="1"/>
</dbReference>
<dbReference type="Gene3D" id="4.10.640.10">
    <property type="entry name" value="Ribosomal protein S18"/>
    <property type="match status" value="1"/>
</dbReference>
<dbReference type="HAMAP" id="MF_00270">
    <property type="entry name" value="Ribosomal_bS18"/>
    <property type="match status" value="1"/>
</dbReference>
<dbReference type="InterPro" id="IPR001648">
    <property type="entry name" value="Ribosomal_bS18"/>
</dbReference>
<dbReference type="InterPro" id="IPR018275">
    <property type="entry name" value="Ribosomal_bS18_CS"/>
</dbReference>
<dbReference type="InterPro" id="IPR036870">
    <property type="entry name" value="Ribosomal_bS18_sf"/>
</dbReference>
<dbReference type="NCBIfam" id="TIGR00165">
    <property type="entry name" value="S18"/>
    <property type="match status" value="1"/>
</dbReference>
<dbReference type="PANTHER" id="PTHR13479">
    <property type="entry name" value="30S RIBOSOMAL PROTEIN S18"/>
    <property type="match status" value="1"/>
</dbReference>
<dbReference type="PANTHER" id="PTHR13479:SF40">
    <property type="entry name" value="SMALL RIBOSOMAL SUBUNIT PROTEIN BS18M"/>
    <property type="match status" value="1"/>
</dbReference>
<dbReference type="Pfam" id="PF01084">
    <property type="entry name" value="Ribosomal_S18"/>
    <property type="match status" value="1"/>
</dbReference>
<dbReference type="PRINTS" id="PR00974">
    <property type="entry name" value="RIBOSOMALS18"/>
</dbReference>
<dbReference type="SUPFAM" id="SSF46911">
    <property type="entry name" value="Ribosomal protein S18"/>
    <property type="match status" value="1"/>
</dbReference>
<dbReference type="PROSITE" id="PS00057">
    <property type="entry name" value="RIBOSOMAL_S18"/>
    <property type="match status" value="1"/>
</dbReference>
<evidence type="ECO:0000255" key="1">
    <source>
        <dbReference type="HAMAP-Rule" id="MF_00270"/>
    </source>
</evidence>
<evidence type="ECO:0000305" key="2"/>
<keyword id="KW-0687">Ribonucleoprotein</keyword>
<keyword id="KW-0689">Ribosomal protein</keyword>
<keyword id="KW-0694">RNA-binding</keyword>
<keyword id="KW-0699">rRNA-binding</keyword>
<sequence>MAGGPRRGGRRRKKVCYFTANGITHIDYKDTELLKRFISERGKILPRRVTGTSAKYQRMLTTAIKRSRHMALLPYVKEEQ</sequence>
<protein>
    <recommendedName>
        <fullName evidence="1">Small ribosomal subunit protein bS18</fullName>
    </recommendedName>
    <alternativeName>
        <fullName evidence="2">30S ribosomal protein S18</fullName>
    </alternativeName>
</protein>
<accession>A6TYM0</accession>
<proteinExistence type="inferred from homology"/>
<gene>
    <name evidence="1" type="primary">rpsR</name>
    <name type="ordered locus">SaurJH1_0426</name>
</gene>
<organism>
    <name type="scientific">Staphylococcus aureus (strain JH1)</name>
    <dbReference type="NCBI Taxonomy" id="359787"/>
    <lineage>
        <taxon>Bacteria</taxon>
        <taxon>Bacillati</taxon>
        <taxon>Bacillota</taxon>
        <taxon>Bacilli</taxon>
        <taxon>Bacillales</taxon>
        <taxon>Staphylococcaceae</taxon>
        <taxon>Staphylococcus</taxon>
    </lineage>
</organism>
<name>RS18_STAA2</name>
<comment type="function">
    <text evidence="1">Binds as a heterodimer with protein bS6 to the central domain of the 16S rRNA, where it helps stabilize the platform of the 30S subunit.</text>
</comment>
<comment type="subunit">
    <text evidence="1">Part of the 30S ribosomal subunit. Forms a tight heterodimer with protein bS6.</text>
</comment>
<comment type="similarity">
    <text evidence="1">Belongs to the bacterial ribosomal protein bS18 family.</text>
</comment>
<reference key="1">
    <citation type="submission" date="2007-06" db="EMBL/GenBank/DDBJ databases">
        <title>Complete sequence of chromosome of Staphylococcus aureus subsp. aureus JH1.</title>
        <authorList>
            <consortium name="US DOE Joint Genome Institute"/>
            <person name="Copeland A."/>
            <person name="Lucas S."/>
            <person name="Lapidus A."/>
            <person name="Barry K."/>
            <person name="Detter J.C."/>
            <person name="Glavina del Rio T."/>
            <person name="Hammon N."/>
            <person name="Israni S."/>
            <person name="Dalin E."/>
            <person name="Tice H."/>
            <person name="Pitluck S."/>
            <person name="Chain P."/>
            <person name="Malfatti S."/>
            <person name="Shin M."/>
            <person name="Vergez L."/>
            <person name="Schmutz J."/>
            <person name="Larimer F."/>
            <person name="Land M."/>
            <person name="Hauser L."/>
            <person name="Kyrpides N."/>
            <person name="Ivanova N."/>
            <person name="Tomasz A."/>
            <person name="Richardson P."/>
        </authorList>
    </citation>
    <scope>NUCLEOTIDE SEQUENCE [LARGE SCALE GENOMIC DNA]</scope>
    <source>
        <strain>JH1</strain>
    </source>
</reference>